<feature type="chain" id="PRO_1000022454" description="Chorismate synthase">
    <location>
        <begin position="1"/>
        <end position="365"/>
    </location>
</feature>
<feature type="binding site" evidence="1">
    <location>
        <position position="48"/>
    </location>
    <ligand>
        <name>NADP(+)</name>
        <dbReference type="ChEBI" id="CHEBI:58349"/>
    </ligand>
</feature>
<feature type="binding site" evidence="1">
    <location>
        <position position="54"/>
    </location>
    <ligand>
        <name>NADP(+)</name>
        <dbReference type="ChEBI" id="CHEBI:58349"/>
    </ligand>
</feature>
<feature type="binding site" evidence="1">
    <location>
        <begin position="125"/>
        <end position="127"/>
    </location>
    <ligand>
        <name>FMN</name>
        <dbReference type="ChEBI" id="CHEBI:58210"/>
    </ligand>
</feature>
<feature type="binding site" evidence="1">
    <location>
        <begin position="237"/>
        <end position="238"/>
    </location>
    <ligand>
        <name>FMN</name>
        <dbReference type="ChEBI" id="CHEBI:58210"/>
    </ligand>
</feature>
<feature type="binding site" evidence="1">
    <location>
        <position position="277"/>
    </location>
    <ligand>
        <name>FMN</name>
        <dbReference type="ChEBI" id="CHEBI:58210"/>
    </ligand>
</feature>
<feature type="binding site" evidence="1">
    <location>
        <begin position="292"/>
        <end position="296"/>
    </location>
    <ligand>
        <name>FMN</name>
        <dbReference type="ChEBI" id="CHEBI:58210"/>
    </ligand>
</feature>
<feature type="binding site" evidence="1">
    <location>
        <position position="318"/>
    </location>
    <ligand>
        <name>FMN</name>
        <dbReference type="ChEBI" id="CHEBI:58210"/>
    </ligand>
</feature>
<accession>A1TRH4</accession>
<reference key="1">
    <citation type="submission" date="2006-12" db="EMBL/GenBank/DDBJ databases">
        <title>Complete sequence of Acidovorax avenae subsp. citrulli AAC00-1.</title>
        <authorList>
            <person name="Copeland A."/>
            <person name="Lucas S."/>
            <person name="Lapidus A."/>
            <person name="Barry K."/>
            <person name="Detter J.C."/>
            <person name="Glavina del Rio T."/>
            <person name="Dalin E."/>
            <person name="Tice H."/>
            <person name="Pitluck S."/>
            <person name="Kiss H."/>
            <person name="Brettin T."/>
            <person name="Bruce D."/>
            <person name="Han C."/>
            <person name="Tapia R."/>
            <person name="Gilna P."/>
            <person name="Schmutz J."/>
            <person name="Larimer F."/>
            <person name="Land M."/>
            <person name="Hauser L."/>
            <person name="Kyrpides N."/>
            <person name="Kim E."/>
            <person name="Stahl D."/>
            <person name="Richardson P."/>
        </authorList>
    </citation>
    <scope>NUCLEOTIDE SEQUENCE [LARGE SCALE GENOMIC DNA]</scope>
    <source>
        <strain>AAC00-1</strain>
    </source>
</reference>
<dbReference type="EC" id="4.2.3.5" evidence="1"/>
<dbReference type="EMBL" id="CP000512">
    <property type="protein sequence ID" value="ABM33562.1"/>
    <property type="molecule type" value="Genomic_DNA"/>
</dbReference>
<dbReference type="RefSeq" id="WP_011796072.1">
    <property type="nucleotide sequence ID" value="NC_008752.1"/>
</dbReference>
<dbReference type="SMR" id="A1TRH4"/>
<dbReference type="STRING" id="397945.Aave_2995"/>
<dbReference type="GeneID" id="79792678"/>
<dbReference type="KEGG" id="aav:Aave_2995"/>
<dbReference type="eggNOG" id="COG0082">
    <property type="taxonomic scope" value="Bacteria"/>
</dbReference>
<dbReference type="HOGENOM" id="CLU_034547_0_2_4"/>
<dbReference type="OrthoDB" id="9771806at2"/>
<dbReference type="UniPathway" id="UPA00053">
    <property type="reaction ID" value="UER00090"/>
</dbReference>
<dbReference type="Proteomes" id="UP000002596">
    <property type="component" value="Chromosome"/>
</dbReference>
<dbReference type="GO" id="GO:0005829">
    <property type="term" value="C:cytosol"/>
    <property type="evidence" value="ECO:0007669"/>
    <property type="project" value="TreeGrafter"/>
</dbReference>
<dbReference type="GO" id="GO:0004107">
    <property type="term" value="F:chorismate synthase activity"/>
    <property type="evidence" value="ECO:0007669"/>
    <property type="project" value="UniProtKB-UniRule"/>
</dbReference>
<dbReference type="GO" id="GO:0010181">
    <property type="term" value="F:FMN binding"/>
    <property type="evidence" value="ECO:0007669"/>
    <property type="project" value="TreeGrafter"/>
</dbReference>
<dbReference type="GO" id="GO:0008652">
    <property type="term" value="P:amino acid biosynthetic process"/>
    <property type="evidence" value="ECO:0007669"/>
    <property type="project" value="UniProtKB-KW"/>
</dbReference>
<dbReference type="GO" id="GO:0009073">
    <property type="term" value="P:aromatic amino acid family biosynthetic process"/>
    <property type="evidence" value="ECO:0007669"/>
    <property type="project" value="UniProtKB-KW"/>
</dbReference>
<dbReference type="GO" id="GO:0009423">
    <property type="term" value="P:chorismate biosynthetic process"/>
    <property type="evidence" value="ECO:0007669"/>
    <property type="project" value="UniProtKB-UniRule"/>
</dbReference>
<dbReference type="CDD" id="cd07304">
    <property type="entry name" value="Chorismate_synthase"/>
    <property type="match status" value="1"/>
</dbReference>
<dbReference type="FunFam" id="3.60.150.10:FF:000001">
    <property type="entry name" value="Chorismate synthase"/>
    <property type="match status" value="1"/>
</dbReference>
<dbReference type="Gene3D" id="3.60.150.10">
    <property type="entry name" value="Chorismate synthase AroC"/>
    <property type="match status" value="1"/>
</dbReference>
<dbReference type="HAMAP" id="MF_00300">
    <property type="entry name" value="Chorismate_synth"/>
    <property type="match status" value="1"/>
</dbReference>
<dbReference type="InterPro" id="IPR000453">
    <property type="entry name" value="Chorismate_synth"/>
</dbReference>
<dbReference type="InterPro" id="IPR035904">
    <property type="entry name" value="Chorismate_synth_AroC_sf"/>
</dbReference>
<dbReference type="InterPro" id="IPR020541">
    <property type="entry name" value="Chorismate_synthase_CS"/>
</dbReference>
<dbReference type="NCBIfam" id="TIGR00033">
    <property type="entry name" value="aroC"/>
    <property type="match status" value="1"/>
</dbReference>
<dbReference type="NCBIfam" id="NF003793">
    <property type="entry name" value="PRK05382.1"/>
    <property type="match status" value="1"/>
</dbReference>
<dbReference type="PANTHER" id="PTHR21085">
    <property type="entry name" value="CHORISMATE SYNTHASE"/>
    <property type="match status" value="1"/>
</dbReference>
<dbReference type="PANTHER" id="PTHR21085:SF0">
    <property type="entry name" value="CHORISMATE SYNTHASE"/>
    <property type="match status" value="1"/>
</dbReference>
<dbReference type="Pfam" id="PF01264">
    <property type="entry name" value="Chorismate_synt"/>
    <property type="match status" value="1"/>
</dbReference>
<dbReference type="PIRSF" id="PIRSF001456">
    <property type="entry name" value="Chorismate_synth"/>
    <property type="match status" value="1"/>
</dbReference>
<dbReference type="SUPFAM" id="SSF103263">
    <property type="entry name" value="Chorismate synthase, AroC"/>
    <property type="match status" value="1"/>
</dbReference>
<dbReference type="PROSITE" id="PS00787">
    <property type="entry name" value="CHORISMATE_SYNTHASE_1"/>
    <property type="match status" value="1"/>
</dbReference>
<dbReference type="PROSITE" id="PS00788">
    <property type="entry name" value="CHORISMATE_SYNTHASE_2"/>
    <property type="match status" value="1"/>
</dbReference>
<dbReference type="PROSITE" id="PS00789">
    <property type="entry name" value="CHORISMATE_SYNTHASE_3"/>
    <property type="match status" value="1"/>
</dbReference>
<gene>
    <name evidence="1" type="primary">aroC</name>
    <name type="ordered locus">Aave_2995</name>
</gene>
<sequence>MSGNTLGTIFAVTNFGESHGPAIGCVIDGCPPGMELAEADIQAELDRRRPGTSRHVTQRNEPDAVEILSGVYEGRTTGTPIALLIRNTDQRSKDYSNIAQSFRPGHADYTYWHKYGVRDPRGGGRSSARLTAPTVAAGAVARKWLQAKYGVELRACMTQLGELEIPFESWDHVPHNPFFAPVADVARYEEYMDALRKAGDSCGARLRVQARNVPVGLGEPLYDKLDADIAHAMMGLNAVKGVEIGAGFASVAQRGTTHGDSLTPKGFASNNAGGVLGGISTGQDIEVSLAIKPTSSIISPRESIDVHGQSTEVVTKGRHDPCVGIRAAPIAEALLAIVLMDHALRHRAQCGDVVQAVAPIQASFL</sequence>
<comment type="function">
    <text evidence="1">Catalyzes the anti-1,4-elimination of the C-3 phosphate and the C-6 proR hydrogen from 5-enolpyruvylshikimate-3-phosphate (EPSP) to yield chorismate, which is the branch point compound that serves as the starting substrate for the three terminal pathways of aromatic amino acid biosynthesis. This reaction introduces a second double bond into the aromatic ring system.</text>
</comment>
<comment type="catalytic activity">
    <reaction evidence="1">
        <text>5-O-(1-carboxyvinyl)-3-phosphoshikimate = chorismate + phosphate</text>
        <dbReference type="Rhea" id="RHEA:21020"/>
        <dbReference type="ChEBI" id="CHEBI:29748"/>
        <dbReference type="ChEBI" id="CHEBI:43474"/>
        <dbReference type="ChEBI" id="CHEBI:57701"/>
        <dbReference type="EC" id="4.2.3.5"/>
    </reaction>
</comment>
<comment type="cofactor">
    <cofactor evidence="1">
        <name>FMNH2</name>
        <dbReference type="ChEBI" id="CHEBI:57618"/>
    </cofactor>
    <text evidence="1">Reduced FMN (FMNH(2)).</text>
</comment>
<comment type="pathway">
    <text evidence="1">Metabolic intermediate biosynthesis; chorismate biosynthesis; chorismate from D-erythrose 4-phosphate and phosphoenolpyruvate: step 7/7.</text>
</comment>
<comment type="subunit">
    <text evidence="1">Homotetramer.</text>
</comment>
<comment type="similarity">
    <text evidence="1">Belongs to the chorismate synthase family.</text>
</comment>
<proteinExistence type="inferred from homology"/>
<name>AROC_PARC0</name>
<keyword id="KW-0028">Amino-acid biosynthesis</keyword>
<keyword id="KW-0057">Aromatic amino acid biosynthesis</keyword>
<keyword id="KW-0274">FAD</keyword>
<keyword id="KW-0285">Flavoprotein</keyword>
<keyword id="KW-0288">FMN</keyword>
<keyword id="KW-0456">Lyase</keyword>
<keyword id="KW-0521">NADP</keyword>
<protein>
    <recommendedName>
        <fullName evidence="1">Chorismate synthase</fullName>
        <shortName evidence="1">CS</shortName>
        <ecNumber evidence="1">4.2.3.5</ecNumber>
    </recommendedName>
    <alternativeName>
        <fullName evidence="1">5-enolpyruvylshikimate-3-phosphate phospholyase</fullName>
    </alternativeName>
</protein>
<organism>
    <name type="scientific">Paracidovorax citrulli (strain AAC00-1)</name>
    <name type="common">Acidovorax citrulli</name>
    <dbReference type="NCBI Taxonomy" id="397945"/>
    <lineage>
        <taxon>Bacteria</taxon>
        <taxon>Pseudomonadati</taxon>
        <taxon>Pseudomonadota</taxon>
        <taxon>Betaproteobacteria</taxon>
        <taxon>Burkholderiales</taxon>
        <taxon>Comamonadaceae</taxon>
        <taxon>Paracidovorax</taxon>
    </lineage>
</organism>
<evidence type="ECO:0000255" key="1">
    <source>
        <dbReference type="HAMAP-Rule" id="MF_00300"/>
    </source>
</evidence>